<name>FABZ_DEIGD</name>
<evidence type="ECO:0000255" key="1">
    <source>
        <dbReference type="HAMAP-Rule" id="MF_00406"/>
    </source>
</evidence>
<proteinExistence type="inferred from homology"/>
<comment type="function">
    <text evidence="1">Involved in unsaturated fatty acids biosynthesis. Catalyzes the dehydration of short chain beta-hydroxyacyl-ACPs and long chain saturated and unsaturated beta-hydroxyacyl-ACPs.</text>
</comment>
<comment type="catalytic activity">
    <reaction evidence="1">
        <text>a (3R)-hydroxyacyl-[ACP] = a (2E)-enoyl-[ACP] + H2O</text>
        <dbReference type="Rhea" id="RHEA:13097"/>
        <dbReference type="Rhea" id="RHEA-COMP:9925"/>
        <dbReference type="Rhea" id="RHEA-COMP:9945"/>
        <dbReference type="ChEBI" id="CHEBI:15377"/>
        <dbReference type="ChEBI" id="CHEBI:78784"/>
        <dbReference type="ChEBI" id="CHEBI:78827"/>
        <dbReference type="EC" id="4.2.1.59"/>
    </reaction>
</comment>
<comment type="subcellular location">
    <subcellularLocation>
        <location evidence="1">Cytoplasm</location>
    </subcellularLocation>
</comment>
<comment type="similarity">
    <text evidence="1">Belongs to the thioester dehydratase family. FabZ subfamily.</text>
</comment>
<protein>
    <recommendedName>
        <fullName evidence="1">3-hydroxyacyl-[acyl-carrier-protein] dehydratase FabZ</fullName>
        <ecNumber evidence="1">4.2.1.59</ecNumber>
    </recommendedName>
    <alternativeName>
        <fullName evidence="1">(3R)-hydroxymyristoyl-[acyl-carrier-protein] dehydratase</fullName>
        <shortName evidence="1">(3R)-hydroxymyristoyl-ACP dehydrase</shortName>
    </alternativeName>
    <alternativeName>
        <fullName evidence="1">Beta-hydroxyacyl-ACP dehydratase</fullName>
    </alternativeName>
</protein>
<keyword id="KW-0963">Cytoplasm</keyword>
<keyword id="KW-0441">Lipid A biosynthesis</keyword>
<keyword id="KW-0444">Lipid biosynthesis</keyword>
<keyword id="KW-0443">Lipid metabolism</keyword>
<keyword id="KW-0456">Lyase</keyword>
<organism>
    <name type="scientific">Deinococcus geothermalis (strain DSM 11300 / CIP 105573 / AG-3a)</name>
    <dbReference type="NCBI Taxonomy" id="319795"/>
    <lineage>
        <taxon>Bacteria</taxon>
        <taxon>Thermotogati</taxon>
        <taxon>Deinococcota</taxon>
        <taxon>Deinococci</taxon>
        <taxon>Deinococcales</taxon>
        <taxon>Deinococcaceae</taxon>
        <taxon>Deinococcus</taxon>
    </lineage>
</organism>
<feature type="chain" id="PRO_0000340773" description="3-hydroxyacyl-[acyl-carrier-protein] dehydratase FabZ">
    <location>
        <begin position="1"/>
        <end position="142"/>
    </location>
</feature>
<feature type="active site" evidence="1">
    <location>
        <position position="49"/>
    </location>
</feature>
<reference key="1">
    <citation type="submission" date="2006-04" db="EMBL/GenBank/DDBJ databases">
        <title>Complete sequence of chromosome of Deinococcus geothermalis DSM 11300.</title>
        <authorList>
            <person name="Copeland A."/>
            <person name="Lucas S."/>
            <person name="Lapidus A."/>
            <person name="Barry K."/>
            <person name="Detter J.C."/>
            <person name="Glavina del Rio T."/>
            <person name="Hammon N."/>
            <person name="Israni S."/>
            <person name="Dalin E."/>
            <person name="Tice H."/>
            <person name="Pitluck S."/>
            <person name="Brettin T."/>
            <person name="Bruce D."/>
            <person name="Han C."/>
            <person name="Tapia R."/>
            <person name="Saunders E."/>
            <person name="Gilna P."/>
            <person name="Schmutz J."/>
            <person name="Larimer F."/>
            <person name="Land M."/>
            <person name="Hauser L."/>
            <person name="Kyrpides N."/>
            <person name="Kim E."/>
            <person name="Daly M.J."/>
            <person name="Fredrickson J.K."/>
            <person name="Makarova K.S."/>
            <person name="Gaidamakova E.K."/>
            <person name="Zhai M."/>
            <person name="Richardson P."/>
        </authorList>
    </citation>
    <scope>NUCLEOTIDE SEQUENCE [LARGE SCALE GENOMIC DNA]</scope>
    <source>
        <strain>DSM 11300 / CIP 105573 / AG-3a</strain>
    </source>
</reference>
<dbReference type="EC" id="4.2.1.59" evidence="1"/>
<dbReference type="EMBL" id="CP000359">
    <property type="protein sequence ID" value="ABF45479.1"/>
    <property type="molecule type" value="Genomic_DNA"/>
</dbReference>
<dbReference type="RefSeq" id="WP_011530316.1">
    <property type="nucleotide sequence ID" value="NC_008025.1"/>
</dbReference>
<dbReference type="SMR" id="Q1IZ55"/>
<dbReference type="STRING" id="319795.Dgeo_1182"/>
<dbReference type="KEGG" id="dge:Dgeo_1182"/>
<dbReference type="eggNOG" id="COG0764">
    <property type="taxonomic scope" value="Bacteria"/>
</dbReference>
<dbReference type="HOGENOM" id="CLU_078912_1_2_0"/>
<dbReference type="Proteomes" id="UP000002431">
    <property type="component" value="Chromosome"/>
</dbReference>
<dbReference type="GO" id="GO:0005737">
    <property type="term" value="C:cytoplasm"/>
    <property type="evidence" value="ECO:0007669"/>
    <property type="project" value="UniProtKB-SubCell"/>
</dbReference>
<dbReference type="GO" id="GO:0016020">
    <property type="term" value="C:membrane"/>
    <property type="evidence" value="ECO:0007669"/>
    <property type="project" value="GOC"/>
</dbReference>
<dbReference type="GO" id="GO:0019171">
    <property type="term" value="F:(3R)-hydroxyacyl-[acyl-carrier-protein] dehydratase activity"/>
    <property type="evidence" value="ECO:0007669"/>
    <property type="project" value="UniProtKB-EC"/>
</dbReference>
<dbReference type="GO" id="GO:0006633">
    <property type="term" value="P:fatty acid biosynthetic process"/>
    <property type="evidence" value="ECO:0007669"/>
    <property type="project" value="UniProtKB-UniRule"/>
</dbReference>
<dbReference type="GO" id="GO:0009245">
    <property type="term" value="P:lipid A biosynthetic process"/>
    <property type="evidence" value="ECO:0007669"/>
    <property type="project" value="UniProtKB-UniRule"/>
</dbReference>
<dbReference type="CDD" id="cd01288">
    <property type="entry name" value="FabZ"/>
    <property type="match status" value="1"/>
</dbReference>
<dbReference type="FunFam" id="3.10.129.10:FF:000001">
    <property type="entry name" value="3-hydroxyacyl-[acyl-carrier-protein] dehydratase FabZ"/>
    <property type="match status" value="1"/>
</dbReference>
<dbReference type="Gene3D" id="3.10.129.10">
    <property type="entry name" value="Hotdog Thioesterase"/>
    <property type="match status" value="1"/>
</dbReference>
<dbReference type="HAMAP" id="MF_00406">
    <property type="entry name" value="FabZ"/>
    <property type="match status" value="1"/>
</dbReference>
<dbReference type="InterPro" id="IPR013114">
    <property type="entry name" value="FabA_FabZ"/>
</dbReference>
<dbReference type="InterPro" id="IPR010084">
    <property type="entry name" value="FabZ"/>
</dbReference>
<dbReference type="InterPro" id="IPR029069">
    <property type="entry name" value="HotDog_dom_sf"/>
</dbReference>
<dbReference type="NCBIfam" id="TIGR01750">
    <property type="entry name" value="fabZ"/>
    <property type="match status" value="1"/>
</dbReference>
<dbReference type="NCBIfam" id="NF000582">
    <property type="entry name" value="PRK00006.1"/>
    <property type="match status" value="1"/>
</dbReference>
<dbReference type="PANTHER" id="PTHR30272">
    <property type="entry name" value="3-HYDROXYACYL-[ACYL-CARRIER-PROTEIN] DEHYDRATASE"/>
    <property type="match status" value="1"/>
</dbReference>
<dbReference type="PANTHER" id="PTHR30272:SF1">
    <property type="entry name" value="3-HYDROXYACYL-[ACYL-CARRIER-PROTEIN] DEHYDRATASE"/>
    <property type="match status" value="1"/>
</dbReference>
<dbReference type="Pfam" id="PF07977">
    <property type="entry name" value="FabA"/>
    <property type="match status" value="1"/>
</dbReference>
<dbReference type="SUPFAM" id="SSF54637">
    <property type="entry name" value="Thioesterase/thiol ester dehydrase-isomerase"/>
    <property type="match status" value="1"/>
</dbReference>
<sequence>MEPLLIQDVLKTLPHRFPFVLVDRVLSAQDGEVHALKNVTVNEPFFPGHFPQEPVMPGVLIVEALAQASMFCLHGQLEPGTVGYLAGVEGARFKRKVIPGDQLHLYAKLDFLRRGLGKTTCRAEVDGQVAAEATILFAVAKG</sequence>
<gene>
    <name evidence="1" type="primary">fabZ</name>
    <name type="ordered locus">Dgeo_1182</name>
</gene>
<accession>Q1IZ55</accession>